<dbReference type="EMBL" id="Y09525">
    <property type="protein sequence ID" value="CAA70711.1"/>
    <property type="molecule type" value="Genomic_DNA"/>
</dbReference>
<dbReference type="EMBL" id="Y16474">
    <property type="protein sequence ID" value="CAA76251.1"/>
    <property type="molecule type" value="Genomic_DNA"/>
</dbReference>
<dbReference type="PIR" id="F71390">
    <property type="entry name" value="F71390"/>
</dbReference>
<dbReference type="RefSeq" id="NP_007541.1">
    <property type="nucleotide sequence ID" value="NC_001912.1"/>
</dbReference>
<dbReference type="SMR" id="O21003"/>
<dbReference type="GeneID" id="808216"/>
<dbReference type="CTD" id="4509"/>
<dbReference type="GO" id="GO:0031966">
    <property type="term" value="C:mitochondrial membrane"/>
    <property type="evidence" value="ECO:0007669"/>
    <property type="project" value="UniProtKB-SubCell"/>
</dbReference>
<dbReference type="GO" id="GO:0045259">
    <property type="term" value="C:proton-transporting ATP synthase complex"/>
    <property type="evidence" value="ECO:0007669"/>
    <property type="project" value="UniProtKB-KW"/>
</dbReference>
<dbReference type="GO" id="GO:0015078">
    <property type="term" value="F:proton transmembrane transporter activity"/>
    <property type="evidence" value="ECO:0007669"/>
    <property type="project" value="InterPro"/>
</dbReference>
<dbReference type="GO" id="GO:0015986">
    <property type="term" value="P:proton motive force-driven ATP synthesis"/>
    <property type="evidence" value="ECO:0007669"/>
    <property type="project" value="InterPro"/>
</dbReference>
<dbReference type="InterPro" id="IPR001421">
    <property type="entry name" value="ATP8_metazoa"/>
</dbReference>
<dbReference type="InterPro" id="IPR050635">
    <property type="entry name" value="ATPase_protein_8"/>
</dbReference>
<dbReference type="PANTHER" id="PTHR39937">
    <property type="entry name" value="ATP SYNTHASE PROTEIN 8"/>
    <property type="match status" value="1"/>
</dbReference>
<dbReference type="PANTHER" id="PTHR39937:SF1">
    <property type="entry name" value="ATP SYNTHASE PROTEIN 8"/>
    <property type="match status" value="1"/>
</dbReference>
<dbReference type="Pfam" id="PF00895">
    <property type="entry name" value="ATP-synt_8"/>
    <property type="match status" value="1"/>
</dbReference>
<evidence type="ECO:0000250" key="1">
    <source>
        <dbReference type="UniProtKB" id="P03928"/>
    </source>
</evidence>
<evidence type="ECO:0000250" key="2">
    <source>
        <dbReference type="UniProtKB" id="P19483"/>
    </source>
</evidence>
<evidence type="ECO:0000255" key="3"/>
<evidence type="ECO:0000305" key="4"/>
<accession>O21003</accession>
<accession>O79418</accession>
<name>ATP8_BRALA</name>
<geneLocation type="mitochondrion"/>
<comment type="function">
    <text evidence="1 2">Subunit 8, of the mitochondrial membrane ATP synthase complex (F(1)F(0) ATP synthase or Complex V) that produces ATP from ADP in the presence of a proton gradient across the membrane which is generated by electron transport complexes of the respiratory chain. ATP synthase complex consist of a soluble F(1) head domain - the catalytic core - and a membrane F(1) domain - the membrane proton channel. These two domains are linked by a central stalk rotating inside the F(1) region and a stationary peripheral stalk. During catalysis, ATP synthesis in the catalytic domain of F(1) is coupled via a rotary mechanism of the central stalk subunits to proton translocation (By similarity). In vivo, can only synthesize ATP although its ATP hydrolase activity can be activated artificially in vitro (By similarity). Part of the complex F(0) domain (By similarity).</text>
</comment>
<comment type="subunit">
    <text evidence="1">Component of the ATP synthase complex composed at least of ATP5F1A/subunit alpha, ATP5F1B/subunit beta, ATP5MC1/subunit c (homooctomer), MT-ATP6/subunit a, MT-ATP8/subunit 8, ATP5ME/subunit e, ATP5MF/subunit f, ATP5MG/subunit g, ATP5MK/subunit k, ATP5MJ/subunit j, ATP5F1C/subunit gamma, ATP5F1D/subunit delta, ATP5F1E/subunit epsilon, ATP5PF/subunit F6, ATP5PB/subunit b, ATP5PD/subunit d, ATP5PO/subunit OSCP. ATP synthase complex consists of a soluble F(1) head domain (subunits alpha(3) and beta(3)) - the catalytic core - and a membrane F(0) domain - the membrane proton channel (subunits c, a, 8, e, f, g, k and j). These two domains are linked by a central stalk (subunits gamma, delta, and epsilon) rotating inside the F1 region and a stationary peripheral stalk (subunits F6, b, d, and OSCP).</text>
</comment>
<comment type="subcellular location">
    <subcellularLocation>
        <location>Mitochondrion membrane</location>
        <topology>Single-pass membrane protein</topology>
    </subcellularLocation>
</comment>
<comment type="similarity">
    <text evidence="4">Belongs to the ATPase protein 8 family.</text>
</comment>
<organism>
    <name type="scientific">Branchiostoma lanceolatum</name>
    <name type="common">Common lancelet</name>
    <name type="synonym">Amphioxus lanceolatum</name>
    <dbReference type="NCBI Taxonomy" id="7740"/>
    <lineage>
        <taxon>Eukaryota</taxon>
        <taxon>Metazoa</taxon>
        <taxon>Chordata</taxon>
        <taxon>Cephalochordata</taxon>
        <taxon>Leptocardii</taxon>
        <taxon>Amphioxiformes</taxon>
        <taxon>Branchiostomatidae</taxon>
        <taxon>Branchiostoma</taxon>
    </lineage>
</organism>
<reference key="1">
    <citation type="journal article" date="1997" name="Biochem. Genet.">
        <title>A unique cDNA coding for subunits 8 and 6 of mitochondrial adenosine triphosphatase of the lancelet Branchiostoma lanceolatum, an ancestor of vertebrates.</title>
        <authorList>
            <person name="Delarbre C."/>
            <person name="Gachelin G."/>
        </authorList>
    </citation>
    <scope>NUCLEOTIDE SEQUENCE [GENOMIC DNA]</scope>
</reference>
<reference key="2">
    <citation type="journal article" date="1998" name="Nucleic Acids Res.">
        <title>Complete sequence of the amphioxus (Branchiostoma lanceolatum) mitochondrial genome: relations to vertebrates.</title>
        <authorList>
            <person name="Spruyt N."/>
            <person name="Delarbre C."/>
            <person name="Gachelin G."/>
            <person name="Laudet V."/>
        </authorList>
    </citation>
    <scope>NUCLEOTIDE SEQUENCE [GENOMIC DNA]</scope>
</reference>
<gene>
    <name evidence="1" type="primary">MT-ATP8</name>
    <name type="synonym">ATP8</name>
    <name type="synonym">ATPASE8</name>
    <name type="synonym">MTATP8</name>
</gene>
<protein>
    <recommendedName>
        <fullName evidence="1">ATP synthase F(0) complex subunit 8</fullName>
    </recommendedName>
    <alternativeName>
        <fullName>A6L</fullName>
    </alternativeName>
    <alternativeName>
        <fullName>F-ATPase subunit 8</fullName>
    </alternativeName>
</protein>
<keyword id="KW-0066">ATP synthesis</keyword>
<keyword id="KW-0138">CF(0)</keyword>
<keyword id="KW-0375">Hydrogen ion transport</keyword>
<keyword id="KW-0406">Ion transport</keyword>
<keyword id="KW-0472">Membrane</keyword>
<keyword id="KW-0496">Mitochondrion</keyword>
<keyword id="KW-0812">Transmembrane</keyword>
<keyword id="KW-1133">Transmembrane helix</keyword>
<keyword id="KW-0813">Transport</keyword>
<feature type="chain" id="PRO_0000195497" description="ATP synthase F(0) complex subunit 8">
    <location>
        <begin position="1"/>
        <end position="54"/>
    </location>
</feature>
<feature type="transmembrane region" description="Helical" evidence="3">
    <location>
        <begin position="9"/>
        <end position="25"/>
    </location>
</feature>
<feature type="sequence conflict" description="In Ref. 1; CAA70711." evidence="4" ref="1">
    <original>FL</original>
    <variation>LR</variation>
    <location>
        <begin position="11"/>
        <end position="12"/>
    </location>
</feature>
<sequence length="54" mass="6349">MPQLNPIPWVFLFFLVWLVLGFLGLQKFTSVVTTTLDDSSEEVEVKSKEYSWPW</sequence>
<proteinExistence type="inferred from homology"/>